<comment type="function">
    <text evidence="1 4 6 7 8 9 14 15">Adapter protein involved in the Toll-like receptor and IL-1 receptor signaling pathway in the innate immune response (PubMed:9697844). Acts via IRAK1, IRAK2, IRF7 and TRAF6, leading to NF-kappa-B activation, cytokine secretion and the inflammatory response (PubMed:9575168, PubMed:9697844). Increases IL-8 transcription. Involved in IL-18-mediated signaling pathway (PubMed:9697844). Activates IRF1 resulting in its rapid migration into the nucleus to mediate an efficient induction of IFN-beta, NOS2/INOS, and IL12A genes (PubMed:17018642). Upon TLR8 activation by GU-rich single-stranded RNA (GU-rich RNA) derived from viruses, induces IL1B release through NLRP3 inflammasome activation (By similarity). MyD88-mediated signaling in intestinal epithelial cells is crucial for maintenance of gut homeostasis and controls the expression of the antimicrobial lectin REG3G in the small intestine (PubMed:17635956, PubMed:21998396). Mediates leukocyte recruitment at the inflammatory site (PubMed:18941239).</text>
</comment>
<comment type="function">
    <molecule>Isoform 2</molecule>
    <text evidence="4">Defective in its ability to induce IRAK phosphorylation and NF-kappa-B activation and can function as a negative regulator of activation by IL-1 or lipopolysaccharide (LPS).</text>
</comment>
<comment type="subunit">
    <text evidence="1 4 5 6 10 12 14 15">Homodimer. Also forms heterodimers with TIRAP. Binds to TLR2, TLR4, IRAK1, IRAK2 and IRAK4 via their respective TIR domains. Interacts with IL18R1. Interacts with BMX, IL1RL1, IKBKE and IRF7. Interacts with LRRFIP1 and LRRFIP2; this interaction positively regulates Toll-like receptor (TLR) signaling in response to agonist. Interacts with FLII. LRRFIP1 and LRRFIP2 compete with FLII for MYD88-binding. Interacts with IRF1. Upon IL1B treatment, forms a complex with PELI1, IRAK1, IRAK4 and TRAF6; this complex recruits MAP3K7/TAK1, TAB1 and TAB2 to mediate NF-kappa-B activation. Direct binding of SMAD6 to PELI1 prevents the complex formation and hence negatively regulates IL1R-TLR signaling and eventually NF-kappa-B-mediated gene expression. May interact with PIK3AP1. Interacts (via TIR domain) with DHX9 (via H2A and OB-fold regions); this interaction is direct. Interacts with OTUD4 deubiquitinase; the interaction is direct (PubMed:29395066).</text>
</comment>
<comment type="interaction">
    <interactant intactId="EBI-525108">
        <id>P22366</id>
    </interactant>
    <interactant intactId="EBI-625119">
        <id>P35991</id>
        <label>Btk</label>
    </interactant>
    <organismsDiffer>false</organismsDiffer>
    <experiments>2</experiments>
</comment>
<comment type="interaction">
    <interactant intactId="EBI-525108">
        <id>P22366</id>
    </interactant>
    <interactant intactId="EBI-3649276">
        <id>Q3TTA7</id>
        <label>Cblb</label>
    </interactant>
    <organismsDiffer>false</organismsDiffer>
    <experiments>2</experiments>
</comment>
<comment type="interaction">
    <interactant intactId="EBI-525108">
        <id>P22366</id>
    </interactant>
    <interactant intactId="EBI-1782675">
        <id>P13504</id>
        <label>Il1r1</label>
    </interactant>
    <organismsDiffer>false</organismsDiffer>
    <experiments>2</experiments>
</comment>
<comment type="interaction">
    <interactant intactId="EBI-525108">
        <id>P22366</id>
    </interactant>
    <interactant intactId="EBI-448533">
        <id>Q62406</id>
        <label>Irak1</label>
    </interactant>
    <organismsDiffer>false</organismsDiffer>
    <experiments>3</experiments>
</comment>
<comment type="interaction">
    <interactant intactId="EBI-525108">
        <id>P22366</id>
    </interactant>
    <interactant intactId="EBI-3842721">
        <id>Q8R4K2</id>
        <label>Irak4</label>
    </interactant>
    <organismsDiffer>false</organismsDiffer>
    <experiments>8</experiments>
</comment>
<comment type="interaction">
    <interactant intactId="EBI-525108">
        <id>P22366</id>
    </interactant>
    <interactant intactId="EBI-643949">
        <id>Q9EQ32</id>
        <label>Pik3ap1</label>
    </interactant>
    <organismsDiffer>false</organismsDiffer>
    <experiments>2</experiments>
</comment>
<comment type="interaction">
    <interactant intactId="EBI-525108">
        <id>P22366</id>
    </interactant>
    <interactant intactId="EBI-3505834">
        <id>Q9QUN7</id>
        <label>Tlr2</label>
    </interactant>
    <organismsDiffer>false</organismsDiffer>
    <experiments>4</experiments>
</comment>
<comment type="interaction">
    <interactant intactId="EBI-525108">
        <id>P22366</id>
    </interactant>
    <interactant intactId="EBI-1534575">
        <id>Q9QUK6</id>
        <label>Tlr4</label>
    </interactant>
    <organismsDiffer>false</organismsDiffer>
    <experiments>2</experiments>
</comment>
<comment type="interaction">
    <interactant intactId="EBI-525108">
        <id>P22366</id>
    </interactant>
    <interactant intactId="EBI-6126152">
        <id>Q9WUU8</id>
        <label>Tnip1</label>
    </interactant>
    <organismsDiffer>false</organismsDiffer>
    <experiments>3</experiments>
</comment>
<comment type="interaction">
    <interactant intactId="EBI-525108">
        <id>P22366</id>
    </interactant>
    <interactant intactId="EBI-520135">
        <id>Q60803</id>
        <label>Traf3</label>
    </interactant>
    <organismsDiffer>false</organismsDiffer>
    <experiments>5</experiments>
</comment>
<comment type="interaction">
    <interactant intactId="EBI-525108">
        <id>P22366</id>
    </interactant>
    <interactant intactId="EBI-448028">
        <id>P70196</id>
        <label>Traf6</label>
    </interactant>
    <organismsDiffer>false</organismsDiffer>
    <experiments>4</experiments>
</comment>
<comment type="subcellular location">
    <subcellularLocation>
        <location evidence="6">Cytoplasm</location>
    </subcellularLocation>
    <subcellularLocation>
        <location evidence="1">Nucleus</location>
    </subcellularLocation>
</comment>
<comment type="alternative products">
    <event type="alternative splicing"/>
    <isoform>
        <id>P22366-1</id>
        <name>1</name>
        <name>MyD88L</name>
        <sequence type="displayed"/>
    </isoform>
    <isoform>
        <id>P22366-2</id>
        <name>2</name>
        <name>MyD88S</name>
        <sequence type="described" ref="VSP_038888"/>
    </isoform>
</comment>
<comment type="tissue specificity">
    <text evidence="4 9 11 13 14">Detected in bone marrow. Isoform 1 is expressed in testis, kidney, lung, ovary, adrenal gland, provstate, thymus and heart, and weakly in skeletal muscle, liver, spleen and brain. Isoform 2 is mainly expressed in the spleen and weakly in brain.</text>
</comment>
<comment type="induction">
    <text evidence="11">By interleukin-6.</text>
</comment>
<comment type="domain">
    <text evidence="4">The intermediate domain (ID) is required for the phosphorylation and activation of IRAK.</text>
</comment>
<comment type="PTM">
    <text evidence="1">Ubiquitinated; undergoes 'Lys-63'-linked polyubiquitination. OTUD4 specifically hydrolyzes 'Lys-63'-linked polyubiquitinated MYD88. Deubiquitinated by USP3 that cleaves 'Lys-63'-linked ubiquitin chains leading to inhibition of MYD88-induced NF-kappa-B signaling.</text>
</comment>
<comment type="disruption phenotype">
    <text evidence="8 9 15">Mice appear normal, but display loss of activation of NF-kappa-B in response to IL-1 or IL-18. They show no increase in interferon gamma production or in stimulation of natural killer cell activity in response to IL-18. They are impaired in production of cytokines in response to IL-1. They have defects in pro-inflammatory gene expression and leukocyte recruitment after brain injury. Mice have a diminished capacity to kill L.monocytogenes in the lumen of the distal small intestine and express markedly diminished levels of REG3G.</text>
</comment>
<comment type="miscellaneous">
    <molecule>Isoform 1</molecule>
    <text>Major isoform.</text>
</comment>
<comment type="sequence caution" evidence="16">
    <conflict type="erroneous initiation">
        <sequence resource="EMBL-CDS" id="CAA35762"/>
    </conflict>
    <text>Truncated N-terminus.</text>
</comment>
<reference key="1">
    <citation type="journal article" date="1997" name="FEBS Lett.">
        <title>The cloning and characterization of human MyD88: a member of an IL-1 receptor related family.</title>
        <authorList>
            <person name="Bonnert T.P."/>
            <person name="Garka K.E."/>
            <person name="Parnet P."/>
            <person name="Sonoda G."/>
            <person name="Testa J.R."/>
            <person name="Sims J.E."/>
        </authorList>
    </citation>
    <scope>NUCLEOTIDE SEQUENCE [MRNA] (ISOFORM 1)</scope>
    <scope>TISSUE SPECIFICITY</scope>
</reference>
<reference key="2">
    <citation type="journal article" date="1997" name="Genomics">
        <title>Genetic structure and chromosomal mapping of MyD88.</title>
        <authorList>
            <person name="Hardiman G."/>
            <person name="Jenkins N.A."/>
            <person name="Copeland N.G."/>
            <person name="Gilbert D.J."/>
            <person name="Garcia D.K."/>
            <person name="Naylor S.L."/>
            <person name="Kastelein R.A."/>
            <person name="Bazan J.F."/>
        </authorList>
    </citation>
    <scope>NUCLEOTIDE SEQUENCE [GENOMIC DNA]</scope>
    <source>
        <tissue>Myeloid leukemia cell</tissue>
    </source>
</reference>
<reference key="3">
    <citation type="journal article" date="2004" name="Genome Res.">
        <title>The status, quality, and expansion of the NIH full-length cDNA project: the Mammalian Gene Collection (MGC).</title>
        <authorList>
            <consortium name="The MGC Project Team"/>
        </authorList>
    </citation>
    <scope>NUCLEOTIDE SEQUENCE [LARGE SCALE MRNA] (ISOFORM 1)</scope>
    <source>
        <strain>C57BL/6J</strain>
        <tissue>Mammary gland</tissue>
        <tissue>Olfactory epithelium</tissue>
    </source>
</reference>
<reference key="4">
    <citation type="journal article" date="1990" name="Oncogene">
        <title>Nucleotide sequence and expression of a cDNA encoding MyD88, a novel myeloid differentiation primary response gene induced by IL6.</title>
        <authorList>
            <person name="Lord K.A."/>
            <person name="Hoffman-Liebermann B."/>
            <person name="Liebermann D.A."/>
        </authorList>
    </citation>
    <scope>NUCLEOTIDE SEQUENCE [MRNA] OF 18-296 (ISOFORM 1)</scope>
    <scope>INDUCTION</scope>
    <scope>TISSUE SPECIFICITY</scope>
</reference>
<reference key="5">
    <citation type="journal article" date="1998" name="J. Biol. Chem.">
        <title>MyD88, an adapter protein involved in interleukin-1 signaling.</title>
        <authorList>
            <person name="Burns K."/>
            <person name="Martinon F."/>
            <person name="Esslinger C."/>
            <person name="Pahl H."/>
            <person name="Schneider P."/>
            <person name="Bodmer J.-L."/>
            <person name="Di Marco F."/>
            <person name="French L."/>
            <person name="Tschopp J."/>
        </authorList>
    </citation>
    <scope>FUNCTION</scope>
    <scope>SUBUNIT</scope>
    <scope>TISSUE SPECIFICITY</scope>
    <scope>MUTAGENESIS OF PHE-56</scope>
    <source>
        <tissue>Bone marrow</tissue>
    </source>
</reference>
<reference key="6">
    <citation type="journal article" date="1998" name="Immunity">
        <title>Targeted disruption of the MyD88 gene results in loss of IL-1- and IL-18-mediated function.</title>
        <authorList>
            <person name="Adachi O."/>
            <person name="Kawai T."/>
            <person name="Takeda K."/>
            <person name="Matsumoto M."/>
            <person name="Tsutsui H."/>
            <person name="Sakagami M."/>
            <person name="Nakanishi K."/>
            <person name="Akira S."/>
        </authorList>
    </citation>
    <scope>FUNCTION</scope>
    <scope>INTERACTION WITH IL18R1</scope>
    <scope>DISRUPTION PHENOTYPE</scope>
</reference>
<reference key="7">
    <citation type="journal article" date="2002" name="Curr. Biol.">
        <title>Regulation of interleukin-1- and lipopolysaccharide-induced NF-kappaB activation by alternative splicing of MyD88.</title>
        <authorList>
            <person name="Janssens S."/>
            <person name="Burns K."/>
            <person name="Tschopp J."/>
            <person name="Beyaert R."/>
        </authorList>
    </citation>
    <scope>ALTERNATIVE SPLICING</scope>
    <scope>IDENTIFICATION OF ISOFORM 2</scope>
    <scope>FUNCTION</scope>
    <scope>SUBUNIT</scope>
    <scope>TISSUE SPECIFICITY</scope>
</reference>
<reference key="8">
    <citation type="journal article" date="2006" name="Nat. Immunol.">
        <title>Smad6 negatively regulates interleukin 1-receptor-Toll-like receptor signaling through direct interaction with the adapter Pellino-1.</title>
        <authorList>
            <person name="Choi K.C."/>
            <person name="Lee Y.S."/>
            <person name="Lim S."/>
            <person name="Choi H.K."/>
            <person name="Lee C.H."/>
            <person name="Lee E.K."/>
            <person name="Hong S."/>
            <person name="Kim I.H."/>
            <person name="Kim S.J."/>
            <person name="Park S.H."/>
        </authorList>
    </citation>
    <scope>IDENTIFICATION IN COMPLEX WITH IRAK1; IRAK4; TRAF6 AND PELI1</scope>
</reference>
<reference key="9">
    <citation type="journal article" date="2006" name="Proc. Natl. Acad. Sci. U.S.A.">
        <title>Evidence for licensing of IFN-gamma-induced IFN regulatory factor 1 transcription factor by MyD88 in Toll-like receptor-dependent gene induction program.</title>
        <authorList>
            <person name="Negishi H."/>
            <person name="Fujita Y."/>
            <person name="Yanai H."/>
            <person name="Sakaguchi S."/>
            <person name="Ouyang X."/>
            <person name="Shinohara M."/>
            <person name="Takayanagi H."/>
            <person name="Ohba Y."/>
            <person name="Taniguchi T."/>
            <person name="Honda K."/>
        </authorList>
    </citation>
    <scope>FUNCTION</scope>
    <scope>SUBCELLULAR LOCATION</scope>
    <scope>INTERACTION WITH IRF1</scope>
</reference>
<reference key="10">
    <citation type="journal article" date="2007" name="J. Exp. Med.">
        <title>MyD88-mediated signals induce the bactericidal lectin RegIII gamma and protect mice against intestinal Listeria monocytogenes infection.</title>
        <authorList>
            <person name="Brandl K."/>
            <person name="Plitas G."/>
            <person name="Schnabl B."/>
            <person name="DeMatteo R.P."/>
            <person name="Pamer E.G."/>
        </authorList>
    </citation>
    <scope>FUNCTION</scope>
</reference>
<reference key="11">
    <citation type="journal article" date="2008" name="J. Immunol.">
        <title>Signaling through MyD88 regulates leukocyte recruitment after brain injury.</title>
        <authorList>
            <person name="Babcock A.A."/>
            <person name="Toft-Hansen H."/>
            <person name="Owens T."/>
        </authorList>
    </citation>
    <scope>FUNCTION</scope>
    <scope>DISRUPTION PHENOTYPE</scope>
</reference>
<reference key="12">
    <citation type="journal article" date="2010" name="Cell">
        <title>A tissue-specific atlas of mouse protein phosphorylation and expression.</title>
        <authorList>
            <person name="Huttlin E.L."/>
            <person name="Jedrychowski M.P."/>
            <person name="Elias J.E."/>
            <person name="Goswami T."/>
            <person name="Rad R."/>
            <person name="Beausoleil S.A."/>
            <person name="Villen J."/>
            <person name="Haas W."/>
            <person name="Sowa M.E."/>
            <person name="Gygi S.P."/>
        </authorList>
    </citation>
    <scope>IDENTIFICATION BY MASS SPECTROMETRY [LARGE SCALE ANALYSIS]</scope>
    <source>
        <tissue>Lung</tissue>
        <tissue>Pancreas</tissue>
        <tissue>Spleen</tissue>
    </source>
</reference>
<reference key="13">
    <citation type="journal article" date="2011" name="Science">
        <title>The antibacterial lectin RegIIIgamma promotes the spatial segregation of microbiota and host in the intestine.</title>
        <authorList>
            <person name="Vaishnava S."/>
            <person name="Yamamoto M."/>
            <person name="Severson K.M."/>
            <person name="Ruhn K.A."/>
            <person name="Yu X."/>
            <person name="Koren O."/>
            <person name="Ley R."/>
            <person name="Wakeland E.K."/>
            <person name="Hooper L.V."/>
        </authorList>
    </citation>
    <scope>FUNCTION</scope>
    <scope>TISSUE SPECIFICITY</scope>
    <scope>DISRUPTION PHENOTYPE</scope>
</reference>
<reference key="14">
    <citation type="journal article" date="2012" name="Proc. Natl. Acad. Sci. U.S.A.">
        <title>Role for B-cell adapter for PI3K (BCAP) as a signaling adapter linking Toll-like receptors (TLRs) to serine/threonine kinases PI3K/Akt.</title>
        <authorList>
            <person name="Troutman T.D."/>
            <person name="Hu W."/>
            <person name="Fulenchek S."/>
            <person name="Yamazaki T."/>
            <person name="Kurosaki T."/>
            <person name="Bazan J.F."/>
            <person name="Pasare C."/>
        </authorList>
    </citation>
    <scope>INTERACTION WITH PIK3AP1</scope>
</reference>
<reference key="15">
    <citation type="journal article" date="2018" name="Mol. Cell">
        <title>OTUD4 Is a Phospho-Activated K63 Deubiquitinase that Regulates MyD88-Dependent Signaling.</title>
        <authorList>
            <person name="Zhao Y."/>
            <person name="Mudge M.C."/>
            <person name="Soll J.M."/>
            <person name="Rodrigues R.B."/>
            <person name="Byrum A.K."/>
            <person name="Schwarzkopf E.A."/>
            <person name="Bradstreet T.R."/>
            <person name="Gygi S.P."/>
            <person name="Edelson B.T."/>
            <person name="Mosammaparast N."/>
        </authorList>
    </citation>
    <scope>INTERACTION WITH OTUD4</scope>
</reference>
<protein>
    <recommendedName>
        <fullName>Myeloid differentiation primary response protein MyD88</fullName>
    </recommendedName>
</protein>
<organism>
    <name type="scientific">Mus musculus</name>
    <name type="common">Mouse</name>
    <dbReference type="NCBI Taxonomy" id="10090"/>
    <lineage>
        <taxon>Eukaryota</taxon>
        <taxon>Metazoa</taxon>
        <taxon>Chordata</taxon>
        <taxon>Craniata</taxon>
        <taxon>Vertebrata</taxon>
        <taxon>Euteleostomi</taxon>
        <taxon>Mammalia</taxon>
        <taxon>Eutheria</taxon>
        <taxon>Euarchontoglires</taxon>
        <taxon>Glires</taxon>
        <taxon>Rodentia</taxon>
        <taxon>Myomorpha</taxon>
        <taxon>Muroidea</taxon>
        <taxon>Muridae</taxon>
        <taxon>Murinae</taxon>
        <taxon>Mus</taxon>
        <taxon>Mus</taxon>
    </lineage>
</organism>
<sequence length="296" mass="33753">MSAGDPRVGSGSLDSFMFSIPLVALNVGVRRRLSLFLNPRTPVAADWTLLAEEMGFEYLEIRELETRPDPTRSLLDAWQGRSGASVGRLLELLALLDREDILKELKSRIEEDCQKYLGKQQNQESEKPLQVARVESSVPQTKELGGITTLDDPLGQTPELFDAFICYCPNDIEFVQEMIRQLEQTDYRLKLCVSDRDVLPGTCVWSIASELIEKRCRRMVVVVSDDYLQSKECDFQTKFALSLSPGVQQKRLIPIKYKAMKKDFPSILRFITICDYTNPCTKSWFWTRLAKALSLP</sequence>
<feature type="chain" id="PRO_0000096667" description="Myeloid differentiation primary response protein MyD88">
    <location>
        <begin position="1"/>
        <end position="296"/>
    </location>
</feature>
<feature type="domain" description="Death" evidence="2">
    <location>
        <begin position="54"/>
        <end position="109"/>
    </location>
</feature>
<feature type="domain" description="TIR" evidence="3">
    <location>
        <begin position="159"/>
        <end position="293"/>
    </location>
</feature>
<feature type="region of interest" description="Intermediate domain">
    <location>
        <begin position="110"/>
        <end position="155"/>
    </location>
</feature>
<feature type="modified residue" description="Phosphoserine" evidence="1">
    <location>
        <position position="244"/>
    </location>
</feature>
<feature type="splice variant" id="VSP_038888" description="In isoform 2." evidence="16">
    <location>
        <begin position="110"/>
        <end position="155"/>
    </location>
</feature>
<feature type="mutagenesis site" description="Prevents dimerization of death domains and activation of JNK and NF-kappa-B." evidence="14">
    <original>F</original>
    <variation>N</variation>
    <location>
        <position position="56"/>
    </location>
</feature>
<feature type="sequence conflict" description="In Ref. 1; AAC53013 and 4; CAA35762." evidence="16" ref="1 4">
    <original>A</original>
    <variation>P</variation>
    <location>
        <position position="51"/>
    </location>
</feature>
<gene>
    <name evidence="17" type="primary">Myd88</name>
</gene>
<keyword id="KW-0025">Alternative splicing</keyword>
<keyword id="KW-0963">Cytoplasm</keyword>
<keyword id="KW-0391">Immunity</keyword>
<keyword id="KW-0395">Inflammatory response</keyword>
<keyword id="KW-0399">Innate immunity</keyword>
<keyword id="KW-0539">Nucleus</keyword>
<keyword id="KW-0597">Phosphoprotein</keyword>
<keyword id="KW-1185">Reference proteome</keyword>
<keyword id="KW-0832">Ubl conjugation</keyword>
<proteinExistence type="evidence at protein level"/>
<accession>P22366</accession>
<accession>O35916</accession>
<dbReference type="EMBL" id="U84409">
    <property type="protein sequence ID" value="AAC53013.1"/>
    <property type="molecule type" value="mRNA"/>
</dbReference>
<dbReference type="EMBL" id="U89023">
    <property type="protein sequence ID" value="AAB83958.1"/>
    <property type="molecule type" value="Genomic_DNA"/>
</dbReference>
<dbReference type="EMBL" id="BC005591">
    <property type="protein sequence ID" value="AAH05591.1"/>
    <property type="molecule type" value="mRNA"/>
</dbReference>
<dbReference type="EMBL" id="BC058787">
    <property type="protein sequence ID" value="AAH58787.1"/>
    <property type="molecule type" value="mRNA"/>
</dbReference>
<dbReference type="EMBL" id="X51397">
    <property type="protein sequence ID" value="CAA35762.1"/>
    <property type="status" value="ALT_INIT"/>
    <property type="molecule type" value="mRNA"/>
</dbReference>
<dbReference type="CCDS" id="CCDS23612.1">
    <molecule id="P22366-1"/>
</dbReference>
<dbReference type="PIR" id="S11226">
    <property type="entry name" value="S11226"/>
</dbReference>
<dbReference type="RefSeq" id="NP_034981.1">
    <molecule id="P22366-1"/>
    <property type="nucleotide sequence ID" value="NM_010851.3"/>
</dbReference>
<dbReference type="SMR" id="P22366"/>
<dbReference type="BioGRID" id="201639">
    <property type="interactions" value="42"/>
</dbReference>
<dbReference type="CORUM" id="P22366"/>
<dbReference type="DIP" id="DIP-34957N"/>
<dbReference type="FunCoup" id="P22366">
    <property type="interactions" value="1559"/>
</dbReference>
<dbReference type="IntAct" id="P22366">
    <property type="interactions" value="29"/>
</dbReference>
<dbReference type="MINT" id="P22366"/>
<dbReference type="STRING" id="10090.ENSMUSP00000035092"/>
<dbReference type="ChEMBL" id="CHEMBL4523204"/>
<dbReference type="iPTMnet" id="P22366"/>
<dbReference type="PhosphoSitePlus" id="P22366"/>
<dbReference type="PaxDb" id="10090-ENSMUSP00000035092"/>
<dbReference type="PeptideAtlas" id="P22366"/>
<dbReference type="ProteomicsDB" id="287567">
    <molecule id="P22366-1"/>
</dbReference>
<dbReference type="ProteomicsDB" id="287568">
    <molecule id="P22366-2"/>
</dbReference>
<dbReference type="Pumba" id="P22366"/>
<dbReference type="Antibodypedia" id="3965">
    <property type="antibodies" value="992 antibodies from 50 providers"/>
</dbReference>
<dbReference type="DNASU" id="17874"/>
<dbReference type="Ensembl" id="ENSMUST00000035092.7">
    <molecule id="P22366-1"/>
    <property type="protein sequence ID" value="ENSMUSP00000035092.7"/>
    <property type="gene ID" value="ENSMUSG00000032508.9"/>
</dbReference>
<dbReference type="GeneID" id="17874"/>
<dbReference type="KEGG" id="mmu:17874"/>
<dbReference type="UCSC" id="uc009sar.1">
    <molecule id="P22366-1"/>
    <property type="organism name" value="mouse"/>
</dbReference>
<dbReference type="AGR" id="MGI:108005"/>
<dbReference type="CTD" id="4615"/>
<dbReference type="MGI" id="MGI:108005">
    <property type="gene designation" value="Myd88"/>
</dbReference>
<dbReference type="VEuPathDB" id="HostDB:ENSMUSG00000032508"/>
<dbReference type="eggNOG" id="ENOG502QWKI">
    <property type="taxonomic scope" value="Eukaryota"/>
</dbReference>
<dbReference type="GeneTree" id="ENSGT00510000048324"/>
<dbReference type="HOGENOM" id="CLU_045884_0_0_1"/>
<dbReference type="InParanoid" id="P22366"/>
<dbReference type="OMA" id="SNECDFQ"/>
<dbReference type="OrthoDB" id="10037120at2759"/>
<dbReference type="PhylomeDB" id="P22366"/>
<dbReference type="TreeFam" id="TF326264"/>
<dbReference type="Reactome" id="R-MMU-1257604">
    <property type="pathway name" value="PIP3 activates AKT signaling"/>
</dbReference>
<dbReference type="Reactome" id="R-MMU-1810476">
    <property type="pathway name" value="RIP-mediated NFkB activation via ZBP1"/>
</dbReference>
<dbReference type="Reactome" id="R-MMU-209543">
    <property type="pathway name" value="p75NTR recruits signalling complexes"/>
</dbReference>
<dbReference type="Reactome" id="R-MMU-3134963">
    <property type="pathway name" value="DEx/H-box helicases activate type I IFN and inflammatory cytokines production"/>
</dbReference>
<dbReference type="Reactome" id="R-MMU-6811558">
    <property type="pathway name" value="PI5P, PP2A and IER3 Regulate PI3K/AKT Signaling"/>
</dbReference>
<dbReference type="Reactome" id="R-MMU-9020702">
    <property type="pathway name" value="Interleukin-1 signaling"/>
</dbReference>
<dbReference type="BioGRID-ORCS" id="17874">
    <property type="hits" value="0 hits in 77 CRISPR screens"/>
</dbReference>
<dbReference type="PRO" id="PR:P22366"/>
<dbReference type="Proteomes" id="UP000000589">
    <property type="component" value="Chromosome 9"/>
</dbReference>
<dbReference type="RNAct" id="P22366">
    <property type="molecule type" value="protein"/>
</dbReference>
<dbReference type="Bgee" id="ENSMUSG00000032508">
    <property type="expression patterns" value="Expressed in granulocyte and 162 other cell types or tissues"/>
</dbReference>
<dbReference type="ExpressionAtlas" id="P22366">
    <property type="expression patterns" value="baseline and differential"/>
</dbReference>
<dbReference type="GO" id="GO:0009986">
    <property type="term" value="C:cell surface"/>
    <property type="evidence" value="ECO:0007669"/>
    <property type="project" value="Ensembl"/>
</dbReference>
<dbReference type="GO" id="GO:0005737">
    <property type="term" value="C:cytoplasm"/>
    <property type="evidence" value="ECO:0000304"/>
    <property type="project" value="MGI"/>
</dbReference>
<dbReference type="GO" id="GO:0005829">
    <property type="term" value="C:cytosol"/>
    <property type="evidence" value="ECO:0000314"/>
    <property type="project" value="BHF-UCL"/>
</dbReference>
<dbReference type="GO" id="GO:0031234">
    <property type="term" value="C:extrinsic component of cytoplasmic side of plasma membrane"/>
    <property type="evidence" value="ECO:0007669"/>
    <property type="project" value="Ensembl"/>
</dbReference>
<dbReference type="GO" id="GO:0005634">
    <property type="term" value="C:nucleus"/>
    <property type="evidence" value="ECO:0007669"/>
    <property type="project" value="UniProtKB-SubCell"/>
</dbReference>
<dbReference type="GO" id="GO:0005886">
    <property type="term" value="C:plasma membrane"/>
    <property type="evidence" value="ECO:0000314"/>
    <property type="project" value="BHF-UCL"/>
</dbReference>
<dbReference type="GO" id="GO:0032991">
    <property type="term" value="C:protein-containing complex"/>
    <property type="evidence" value="ECO:0007669"/>
    <property type="project" value="Ensembl"/>
</dbReference>
<dbReference type="GO" id="GO:0140674">
    <property type="term" value="F:ATP-dependent histone chaperone activity"/>
    <property type="evidence" value="ECO:0000315"/>
    <property type="project" value="MGI"/>
</dbReference>
<dbReference type="GO" id="GO:0042802">
    <property type="term" value="F:identical protein binding"/>
    <property type="evidence" value="ECO:0007669"/>
    <property type="project" value="Ensembl"/>
</dbReference>
<dbReference type="GO" id="GO:0005149">
    <property type="term" value="F:interleukin-1 receptor binding"/>
    <property type="evidence" value="ECO:0000314"/>
    <property type="project" value="UniProtKB"/>
</dbReference>
<dbReference type="GO" id="GO:0035591">
    <property type="term" value="F:signaling adaptor activity"/>
    <property type="evidence" value="ECO:0000314"/>
    <property type="project" value="MGI"/>
</dbReference>
<dbReference type="GO" id="GO:0070976">
    <property type="term" value="F:TIR domain binding"/>
    <property type="evidence" value="ECO:0007669"/>
    <property type="project" value="Ensembl"/>
</dbReference>
<dbReference type="GO" id="GO:0005121">
    <property type="term" value="F:Toll binding"/>
    <property type="evidence" value="ECO:0007669"/>
    <property type="project" value="Ensembl"/>
</dbReference>
<dbReference type="GO" id="GO:0035325">
    <property type="term" value="F:Toll-like receptor binding"/>
    <property type="evidence" value="ECO:0000353"/>
    <property type="project" value="UniProtKB"/>
</dbReference>
<dbReference type="GO" id="GO:0070935">
    <property type="term" value="P:3'-UTR-mediated mRNA stabilization"/>
    <property type="evidence" value="ECO:0007669"/>
    <property type="project" value="Ensembl"/>
</dbReference>
<dbReference type="GO" id="GO:0006915">
    <property type="term" value="P:apoptotic process"/>
    <property type="evidence" value="ECO:0007669"/>
    <property type="project" value="Ensembl"/>
</dbReference>
<dbReference type="GO" id="GO:0007178">
    <property type="term" value="P:cell surface receptor protein serine/threonine kinase signaling pathway"/>
    <property type="evidence" value="ECO:0000304"/>
    <property type="project" value="MGI"/>
</dbReference>
<dbReference type="GO" id="GO:0007166">
    <property type="term" value="P:cell surface receptor signaling pathway"/>
    <property type="evidence" value="ECO:0000315"/>
    <property type="project" value="MGI"/>
</dbReference>
<dbReference type="GO" id="GO:0071222">
    <property type="term" value="P:cellular response to lipopolysaccharide"/>
    <property type="evidence" value="ECO:0000315"/>
    <property type="project" value="ARUK-UCL"/>
</dbReference>
<dbReference type="GO" id="GO:0071260">
    <property type="term" value="P:cellular response to mechanical stimulus"/>
    <property type="evidence" value="ECO:0007669"/>
    <property type="project" value="Ensembl"/>
</dbReference>
<dbReference type="GO" id="GO:0140052">
    <property type="term" value="P:cellular response to oxidised low-density lipoprotein particle stimulus"/>
    <property type="evidence" value="ECO:0000315"/>
    <property type="project" value="ARUK-UCL"/>
</dbReference>
<dbReference type="GO" id="GO:0006325">
    <property type="term" value="P:chromatin organization"/>
    <property type="evidence" value="ECO:0000315"/>
    <property type="project" value="MGI"/>
</dbReference>
<dbReference type="GO" id="GO:0050830">
    <property type="term" value="P:defense response to Gram-positive bacterium"/>
    <property type="evidence" value="ECO:0000315"/>
    <property type="project" value="UniProtKB"/>
</dbReference>
<dbReference type="GO" id="GO:0042832">
    <property type="term" value="P:defense response to protozoan"/>
    <property type="evidence" value="ECO:0000315"/>
    <property type="project" value="ARUK-UCL"/>
</dbReference>
<dbReference type="GO" id="GO:0051607">
    <property type="term" value="P:defense response to virus"/>
    <property type="evidence" value="ECO:0000250"/>
    <property type="project" value="UniProtKB"/>
</dbReference>
<dbReference type="GO" id="GO:0090557">
    <property type="term" value="P:establishment of endothelial intestinal barrier"/>
    <property type="evidence" value="ECO:0000315"/>
    <property type="project" value="MGI"/>
</dbReference>
<dbReference type="GO" id="GO:0010467">
    <property type="term" value="P:gene expression"/>
    <property type="evidence" value="ECO:0000315"/>
    <property type="project" value="MGI"/>
</dbReference>
<dbReference type="GO" id="GO:0006955">
    <property type="term" value="P:immune response"/>
    <property type="evidence" value="ECO:0000304"/>
    <property type="project" value="MGI"/>
</dbReference>
<dbReference type="GO" id="GO:0016064">
    <property type="term" value="P:immunoglobulin mediated immune response"/>
    <property type="evidence" value="ECO:0000315"/>
    <property type="project" value="MGI"/>
</dbReference>
<dbReference type="GO" id="GO:0009682">
    <property type="term" value="P:induced systemic resistance"/>
    <property type="evidence" value="ECO:0000315"/>
    <property type="project" value="MGI"/>
</dbReference>
<dbReference type="GO" id="GO:0006954">
    <property type="term" value="P:inflammatory response"/>
    <property type="evidence" value="ECO:0000315"/>
    <property type="project" value="MGI"/>
</dbReference>
<dbReference type="GO" id="GO:0070498">
    <property type="term" value="P:interleukin-1-mediated signaling pathway"/>
    <property type="evidence" value="ECO:0000314"/>
    <property type="project" value="UniProtKB"/>
</dbReference>
<dbReference type="GO" id="GO:0038172">
    <property type="term" value="P:interleukin-33-mediated signaling pathway"/>
    <property type="evidence" value="ECO:0007669"/>
    <property type="project" value="Ensembl"/>
</dbReference>
<dbReference type="GO" id="GO:0007254">
    <property type="term" value="P:JNK cascade"/>
    <property type="evidence" value="ECO:0000315"/>
    <property type="project" value="MGI"/>
</dbReference>
<dbReference type="GO" id="GO:0002269">
    <property type="term" value="P:leukocyte activation involved in inflammatory response"/>
    <property type="evidence" value="ECO:0000316"/>
    <property type="project" value="MGI"/>
</dbReference>
<dbReference type="GO" id="GO:0031663">
    <property type="term" value="P:lipopolysaccharide-mediated signaling pathway"/>
    <property type="evidence" value="ECO:0000315"/>
    <property type="project" value="MGI"/>
</dbReference>
<dbReference type="GO" id="GO:0014004">
    <property type="term" value="P:microglia differentiation"/>
    <property type="evidence" value="ECO:0000315"/>
    <property type="project" value="MGI"/>
</dbReference>
<dbReference type="GO" id="GO:0002755">
    <property type="term" value="P:MyD88-dependent toll-like receptor signaling pathway"/>
    <property type="evidence" value="ECO:0000315"/>
    <property type="project" value="MGI"/>
</dbReference>
<dbReference type="GO" id="GO:0022008">
    <property type="term" value="P:neurogenesis"/>
    <property type="evidence" value="ECO:0000315"/>
    <property type="project" value="MGI"/>
</dbReference>
<dbReference type="GO" id="GO:0002283">
    <property type="term" value="P:neutrophil activation involved in immune response"/>
    <property type="evidence" value="ECO:0000316"/>
    <property type="project" value="MGI"/>
</dbReference>
<dbReference type="GO" id="GO:0070944">
    <property type="term" value="P:neutrophil-mediated killing of bacterium"/>
    <property type="evidence" value="ECO:0000316"/>
    <property type="project" value="MGI"/>
</dbReference>
<dbReference type="GO" id="GO:0006909">
    <property type="term" value="P:phagocytosis"/>
    <property type="evidence" value="ECO:0000315"/>
    <property type="project" value="UniProtKB"/>
</dbReference>
<dbReference type="GO" id="GO:0043123">
    <property type="term" value="P:positive regulation of canonical NF-kappaB signal transduction"/>
    <property type="evidence" value="ECO:0000315"/>
    <property type="project" value="MGI"/>
</dbReference>
<dbReference type="GO" id="GO:0032722">
    <property type="term" value="P:positive regulation of chemokine production"/>
    <property type="evidence" value="ECO:0000316"/>
    <property type="project" value="MGI"/>
</dbReference>
<dbReference type="GO" id="GO:1900017">
    <property type="term" value="P:positive regulation of cytokine production involved in inflammatory response"/>
    <property type="evidence" value="ECO:0000315"/>
    <property type="project" value="ARUK-UCL"/>
</dbReference>
<dbReference type="GO" id="GO:0010628">
    <property type="term" value="P:positive regulation of gene expression"/>
    <property type="evidence" value="ECO:0000315"/>
    <property type="project" value="ARUK-UCL"/>
</dbReference>
<dbReference type="GO" id="GO:0032731">
    <property type="term" value="P:positive regulation of interleukin-1 beta production"/>
    <property type="evidence" value="ECO:0000250"/>
    <property type="project" value="UniProtKB"/>
</dbReference>
<dbReference type="GO" id="GO:0032740">
    <property type="term" value="P:positive regulation of interleukin-17 production"/>
    <property type="evidence" value="ECO:0000315"/>
    <property type="project" value="BHF-UCL"/>
</dbReference>
<dbReference type="GO" id="GO:0032747">
    <property type="term" value="P:positive regulation of interleukin-23 production"/>
    <property type="evidence" value="ECO:0000315"/>
    <property type="project" value="BHF-UCL"/>
</dbReference>
<dbReference type="GO" id="GO:0032755">
    <property type="term" value="P:positive regulation of interleukin-6 production"/>
    <property type="evidence" value="ECO:0000315"/>
    <property type="project" value="BHF-UCL"/>
</dbReference>
<dbReference type="GO" id="GO:0032757">
    <property type="term" value="P:positive regulation of interleukin-8 production"/>
    <property type="evidence" value="ECO:0007669"/>
    <property type="project" value="Ensembl"/>
</dbReference>
<dbReference type="GO" id="GO:0046330">
    <property type="term" value="P:positive regulation of JNK cascade"/>
    <property type="evidence" value="ECO:0000315"/>
    <property type="project" value="MGI"/>
</dbReference>
<dbReference type="GO" id="GO:0050671">
    <property type="term" value="P:positive regulation of lymphocyte proliferation"/>
    <property type="evidence" value="ECO:0000315"/>
    <property type="project" value="MGI"/>
</dbReference>
<dbReference type="GO" id="GO:0060907">
    <property type="term" value="P:positive regulation of macrophage cytokine production"/>
    <property type="evidence" value="ECO:0000315"/>
    <property type="project" value="MGI"/>
</dbReference>
<dbReference type="GO" id="GO:1900227">
    <property type="term" value="P:positive regulation of NLRP3 inflammasome complex assembly"/>
    <property type="evidence" value="ECO:0000250"/>
    <property type="project" value="UniProtKB"/>
</dbReference>
<dbReference type="GO" id="GO:0048661">
    <property type="term" value="P:positive regulation of smooth muscle cell proliferation"/>
    <property type="evidence" value="ECO:0007669"/>
    <property type="project" value="Ensembl"/>
</dbReference>
<dbReference type="GO" id="GO:0045944">
    <property type="term" value="P:positive regulation of transcription by RNA polymerase II"/>
    <property type="evidence" value="ECO:0000315"/>
    <property type="project" value="MGI"/>
</dbReference>
<dbReference type="GO" id="GO:0032760">
    <property type="term" value="P:positive regulation of tumor necrosis factor production"/>
    <property type="evidence" value="ECO:0000315"/>
    <property type="project" value="MGI"/>
</dbReference>
<dbReference type="GO" id="GO:0032481">
    <property type="term" value="P:positive regulation of type I interferon production"/>
    <property type="evidence" value="ECO:0007669"/>
    <property type="project" value="Ensembl"/>
</dbReference>
<dbReference type="GO" id="GO:0042127">
    <property type="term" value="P:regulation of cell population proliferation"/>
    <property type="evidence" value="ECO:0000316"/>
    <property type="project" value="MGI"/>
</dbReference>
<dbReference type="GO" id="GO:2000338">
    <property type="term" value="P:regulation of chemokine (C-X-C motif) ligand 1 production"/>
    <property type="evidence" value="ECO:0000315"/>
    <property type="project" value="MGI"/>
</dbReference>
<dbReference type="GO" id="GO:2000341">
    <property type="term" value="P:regulation of chemokine (C-X-C motif) ligand 2 production"/>
    <property type="evidence" value="ECO:0000315"/>
    <property type="project" value="MGI"/>
</dbReference>
<dbReference type="GO" id="GO:0010468">
    <property type="term" value="P:regulation of gene expression"/>
    <property type="evidence" value="ECO:0000315"/>
    <property type="project" value="MGI"/>
</dbReference>
<dbReference type="GO" id="GO:0050727">
    <property type="term" value="P:regulation of inflammatory response"/>
    <property type="evidence" value="ECO:0000315"/>
    <property type="project" value="BHF-UCL"/>
</dbReference>
<dbReference type="GO" id="GO:0032675">
    <property type="term" value="P:regulation of interleukin-6 production"/>
    <property type="evidence" value="ECO:0000315"/>
    <property type="project" value="MGI"/>
</dbReference>
<dbReference type="GO" id="GO:1902622">
    <property type="term" value="P:regulation of neutrophil migration"/>
    <property type="evidence" value="ECO:0000315"/>
    <property type="project" value="MGI"/>
</dbReference>
<dbReference type="GO" id="GO:0032680">
    <property type="term" value="P:regulation of tumor necrosis factor production"/>
    <property type="evidence" value="ECO:0000315"/>
    <property type="project" value="MGI"/>
</dbReference>
<dbReference type="GO" id="GO:0014075">
    <property type="term" value="P:response to amine"/>
    <property type="evidence" value="ECO:0007669"/>
    <property type="project" value="Ensembl"/>
</dbReference>
<dbReference type="GO" id="GO:0043200">
    <property type="term" value="P:response to amino acid"/>
    <property type="evidence" value="ECO:0007669"/>
    <property type="project" value="Ensembl"/>
</dbReference>
<dbReference type="GO" id="GO:0045471">
    <property type="term" value="P:response to ethanol"/>
    <property type="evidence" value="ECO:0007669"/>
    <property type="project" value="Ensembl"/>
</dbReference>
<dbReference type="GO" id="GO:0032496">
    <property type="term" value="P:response to lipopolysaccharide"/>
    <property type="evidence" value="ECO:0000315"/>
    <property type="project" value="MGI"/>
</dbReference>
<dbReference type="GO" id="GO:0002238">
    <property type="term" value="P:response to molecule of fungal origin"/>
    <property type="evidence" value="ECO:0000315"/>
    <property type="project" value="MGI"/>
</dbReference>
<dbReference type="GO" id="GO:0032494">
    <property type="term" value="P:response to peptidoglycan"/>
    <property type="evidence" value="ECO:0000315"/>
    <property type="project" value="MGI"/>
</dbReference>
<dbReference type="GO" id="GO:0009615">
    <property type="term" value="P:response to virus"/>
    <property type="evidence" value="ECO:0000315"/>
    <property type="project" value="MGI"/>
</dbReference>
<dbReference type="GO" id="GO:0043588">
    <property type="term" value="P:skin development"/>
    <property type="evidence" value="ECO:0000315"/>
    <property type="project" value="MGI"/>
</dbReference>
<dbReference type="GO" id="GO:0008063">
    <property type="term" value="P:Toll signaling pathway"/>
    <property type="evidence" value="ECO:0007669"/>
    <property type="project" value="Ensembl"/>
</dbReference>
<dbReference type="GO" id="GO:0034142">
    <property type="term" value="P:toll-like receptor 4 signaling pathway"/>
    <property type="evidence" value="ECO:0007669"/>
    <property type="project" value="Ensembl"/>
</dbReference>
<dbReference type="GO" id="GO:0034146">
    <property type="term" value="P:toll-like receptor 5 signaling pathway"/>
    <property type="evidence" value="ECO:0007669"/>
    <property type="project" value="Ensembl"/>
</dbReference>
<dbReference type="GO" id="GO:0034158">
    <property type="term" value="P:toll-like receptor 8 signaling pathway"/>
    <property type="evidence" value="ECO:0000250"/>
    <property type="project" value="UniProtKB"/>
</dbReference>
<dbReference type="GO" id="GO:0038124">
    <property type="term" value="P:toll-like receptor TLR6:TLR2 signaling pathway"/>
    <property type="evidence" value="ECO:0007669"/>
    <property type="project" value="Ensembl"/>
</dbReference>
<dbReference type="GO" id="GO:0060337">
    <property type="term" value="P:type I interferon-mediated signaling pathway"/>
    <property type="evidence" value="ECO:0007669"/>
    <property type="project" value="Ensembl"/>
</dbReference>
<dbReference type="CDD" id="cd08312">
    <property type="entry name" value="Death_MyD88"/>
    <property type="match status" value="1"/>
</dbReference>
<dbReference type="FunFam" id="1.10.533.10:FF:000029">
    <property type="entry name" value="Myeloid differentiation primary response protein MyD88"/>
    <property type="match status" value="1"/>
</dbReference>
<dbReference type="FunFam" id="3.40.50.10140:FF:000005">
    <property type="entry name" value="Myeloid differentiation primary response protein MyD88"/>
    <property type="match status" value="1"/>
</dbReference>
<dbReference type="Gene3D" id="1.10.533.10">
    <property type="entry name" value="Death Domain, Fas"/>
    <property type="match status" value="1"/>
</dbReference>
<dbReference type="Gene3D" id="3.40.50.10140">
    <property type="entry name" value="Toll/interleukin-1 receptor homology (TIR) domain"/>
    <property type="match status" value="1"/>
</dbReference>
<dbReference type="InterPro" id="IPR011029">
    <property type="entry name" value="DEATH-like_dom_sf"/>
</dbReference>
<dbReference type="InterPro" id="IPR000488">
    <property type="entry name" value="Death_dom"/>
</dbReference>
<dbReference type="InterPro" id="IPR034249">
    <property type="entry name" value="MyD88_Death"/>
</dbReference>
<dbReference type="InterPro" id="IPR017281">
    <property type="entry name" value="Myelin_different_resp_MyD88"/>
</dbReference>
<dbReference type="InterPro" id="IPR000157">
    <property type="entry name" value="TIR_dom"/>
</dbReference>
<dbReference type="InterPro" id="IPR035897">
    <property type="entry name" value="Toll_tir_struct_dom_sf"/>
</dbReference>
<dbReference type="PANTHER" id="PTHR15079">
    <property type="entry name" value="MYD88"/>
    <property type="match status" value="1"/>
</dbReference>
<dbReference type="PANTHER" id="PTHR15079:SF3">
    <property type="entry name" value="MYELOID DIFFERENTIATION PRIMARY RESPONSE PROTEIN MYD88"/>
    <property type="match status" value="1"/>
</dbReference>
<dbReference type="Pfam" id="PF00531">
    <property type="entry name" value="Death"/>
    <property type="match status" value="1"/>
</dbReference>
<dbReference type="Pfam" id="PF13676">
    <property type="entry name" value="TIR_2"/>
    <property type="match status" value="1"/>
</dbReference>
<dbReference type="PIRSF" id="PIRSF037756">
    <property type="entry name" value="MyD88"/>
    <property type="match status" value="1"/>
</dbReference>
<dbReference type="SMART" id="SM00005">
    <property type="entry name" value="DEATH"/>
    <property type="match status" value="1"/>
</dbReference>
<dbReference type="SMART" id="SM00255">
    <property type="entry name" value="TIR"/>
    <property type="match status" value="1"/>
</dbReference>
<dbReference type="SUPFAM" id="SSF47986">
    <property type="entry name" value="DEATH domain"/>
    <property type="match status" value="1"/>
</dbReference>
<dbReference type="SUPFAM" id="SSF52200">
    <property type="entry name" value="Toll/Interleukin receptor TIR domain"/>
    <property type="match status" value="1"/>
</dbReference>
<dbReference type="PROSITE" id="PS50017">
    <property type="entry name" value="DEATH_DOMAIN"/>
    <property type="match status" value="1"/>
</dbReference>
<dbReference type="PROSITE" id="PS50104">
    <property type="entry name" value="TIR"/>
    <property type="match status" value="1"/>
</dbReference>
<name>MYD88_MOUSE</name>
<evidence type="ECO:0000250" key="1">
    <source>
        <dbReference type="UniProtKB" id="Q99836"/>
    </source>
</evidence>
<evidence type="ECO:0000255" key="2">
    <source>
        <dbReference type="PROSITE-ProRule" id="PRU00064"/>
    </source>
</evidence>
<evidence type="ECO:0000255" key="3">
    <source>
        <dbReference type="PROSITE-ProRule" id="PRU00204"/>
    </source>
</evidence>
<evidence type="ECO:0000269" key="4">
    <source>
    </source>
</evidence>
<evidence type="ECO:0000269" key="5">
    <source>
    </source>
</evidence>
<evidence type="ECO:0000269" key="6">
    <source>
    </source>
</evidence>
<evidence type="ECO:0000269" key="7">
    <source>
    </source>
</evidence>
<evidence type="ECO:0000269" key="8">
    <source>
    </source>
</evidence>
<evidence type="ECO:0000269" key="9">
    <source>
    </source>
</evidence>
<evidence type="ECO:0000269" key="10">
    <source>
    </source>
</evidence>
<evidence type="ECO:0000269" key="11">
    <source>
    </source>
</evidence>
<evidence type="ECO:0000269" key="12">
    <source>
    </source>
</evidence>
<evidence type="ECO:0000269" key="13">
    <source>
    </source>
</evidence>
<evidence type="ECO:0000269" key="14">
    <source>
    </source>
</evidence>
<evidence type="ECO:0000269" key="15">
    <source>
    </source>
</evidence>
<evidence type="ECO:0000305" key="16"/>
<evidence type="ECO:0000312" key="17">
    <source>
        <dbReference type="MGI" id="MGI:108005"/>
    </source>
</evidence>